<evidence type="ECO:0000255" key="1">
    <source>
        <dbReference type="HAMAP-Rule" id="MF_00236"/>
    </source>
</evidence>
<evidence type="ECO:0000256" key="2">
    <source>
        <dbReference type="SAM" id="MobiDB-lite"/>
    </source>
</evidence>
<comment type="function">
    <text evidence="1">Part of the twin-arginine translocation (Tat) system that transports large folded proteins containing a characteristic twin-arginine motif in their signal peptide across membranes. TatA could form the protein-conducting channel of the Tat system.</text>
</comment>
<comment type="subunit">
    <text evidence="1">The Tat system comprises two distinct complexes: a TatABC complex, containing multiple copies of TatA, TatB and TatC subunits, and a separate TatA complex, containing only TatA subunits. Substrates initially bind to the TatABC complex, which probably triggers association of the separate TatA complex to form the active translocon.</text>
</comment>
<comment type="subcellular location">
    <subcellularLocation>
        <location evidence="1">Cell inner membrane</location>
        <topology evidence="1">Single-pass membrane protein</topology>
    </subcellularLocation>
</comment>
<comment type="similarity">
    <text evidence="1">Belongs to the TatA/E family.</text>
</comment>
<proteinExistence type="inferred from homology"/>
<dbReference type="EMBL" id="CP000050">
    <property type="protein sequence ID" value="AAY51222.1"/>
    <property type="molecule type" value="Genomic_DNA"/>
</dbReference>
<dbReference type="RefSeq" id="WP_011039162.1">
    <property type="nucleotide sequence ID" value="NZ_CP155948.1"/>
</dbReference>
<dbReference type="SMR" id="Q4UP01"/>
<dbReference type="KEGG" id="xcb:XC_4184"/>
<dbReference type="HOGENOM" id="CLU_086034_5_3_6"/>
<dbReference type="Proteomes" id="UP000000420">
    <property type="component" value="Chromosome"/>
</dbReference>
<dbReference type="GO" id="GO:0033281">
    <property type="term" value="C:TAT protein transport complex"/>
    <property type="evidence" value="ECO:0007669"/>
    <property type="project" value="UniProtKB-UniRule"/>
</dbReference>
<dbReference type="GO" id="GO:0008320">
    <property type="term" value="F:protein transmembrane transporter activity"/>
    <property type="evidence" value="ECO:0007669"/>
    <property type="project" value="UniProtKB-UniRule"/>
</dbReference>
<dbReference type="GO" id="GO:0043953">
    <property type="term" value="P:protein transport by the Tat complex"/>
    <property type="evidence" value="ECO:0007669"/>
    <property type="project" value="UniProtKB-UniRule"/>
</dbReference>
<dbReference type="Gene3D" id="1.20.5.3310">
    <property type="match status" value="1"/>
</dbReference>
<dbReference type="HAMAP" id="MF_00236">
    <property type="entry name" value="TatA_E"/>
    <property type="match status" value="1"/>
</dbReference>
<dbReference type="InterPro" id="IPR003369">
    <property type="entry name" value="TatA/B/E"/>
</dbReference>
<dbReference type="InterPro" id="IPR006312">
    <property type="entry name" value="TatA/E"/>
</dbReference>
<dbReference type="NCBIfam" id="NF002813">
    <property type="entry name" value="PRK02958.1"/>
    <property type="match status" value="1"/>
</dbReference>
<dbReference type="NCBIfam" id="NF003393">
    <property type="entry name" value="PRK04561.1"/>
    <property type="match status" value="1"/>
</dbReference>
<dbReference type="NCBIfam" id="TIGR01411">
    <property type="entry name" value="tatAE"/>
    <property type="match status" value="1"/>
</dbReference>
<dbReference type="PANTHER" id="PTHR42982">
    <property type="entry name" value="SEC-INDEPENDENT PROTEIN TRANSLOCASE PROTEIN TATA"/>
    <property type="match status" value="1"/>
</dbReference>
<dbReference type="PANTHER" id="PTHR42982:SF1">
    <property type="entry name" value="SEC-INDEPENDENT PROTEIN TRANSLOCASE PROTEIN TATA"/>
    <property type="match status" value="1"/>
</dbReference>
<dbReference type="Pfam" id="PF02416">
    <property type="entry name" value="TatA_B_E"/>
    <property type="match status" value="1"/>
</dbReference>
<gene>
    <name evidence="1" type="primary">tatA</name>
    <name type="ordered locus">XC_4184</name>
</gene>
<reference key="1">
    <citation type="journal article" date="2005" name="Genome Res.">
        <title>Comparative and functional genomic analyses of the pathogenicity of phytopathogen Xanthomonas campestris pv. campestris.</title>
        <authorList>
            <person name="Qian W."/>
            <person name="Jia Y."/>
            <person name="Ren S.-X."/>
            <person name="He Y.-Q."/>
            <person name="Feng J.-X."/>
            <person name="Lu L.-F."/>
            <person name="Sun Q."/>
            <person name="Ying G."/>
            <person name="Tang D.-J."/>
            <person name="Tang H."/>
            <person name="Wu W."/>
            <person name="Hao P."/>
            <person name="Wang L."/>
            <person name="Jiang B.-L."/>
            <person name="Zeng S."/>
            <person name="Gu W.-Y."/>
            <person name="Lu G."/>
            <person name="Rong L."/>
            <person name="Tian Y."/>
            <person name="Yao Z."/>
            <person name="Fu G."/>
            <person name="Chen B."/>
            <person name="Fang R."/>
            <person name="Qiang B."/>
            <person name="Chen Z."/>
            <person name="Zhao G.-P."/>
            <person name="Tang J.-L."/>
            <person name="He C."/>
        </authorList>
    </citation>
    <scope>NUCLEOTIDE SEQUENCE [LARGE SCALE GENOMIC DNA]</scope>
    <source>
        <strain>8004</strain>
    </source>
</reference>
<sequence>MGSFSIWHWLIVLVIVLLVFGTKRLTSGAKDLGSAVKEFKKGMHDDDKPAGKLGDDSRSAEQAREAQAERDRDAR</sequence>
<accession>Q4UP01</accession>
<organism>
    <name type="scientific">Xanthomonas campestris pv. campestris (strain 8004)</name>
    <dbReference type="NCBI Taxonomy" id="314565"/>
    <lineage>
        <taxon>Bacteria</taxon>
        <taxon>Pseudomonadati</taxon>
        <taxon>Pseudomonadota</taxon>
        <taxon>Gammaproteobacteria</taxon>
        <taxon>Lysobacterales</taxon>
        <taxon>Lysobacteraceae</taxon>
        <taxon>Xanthomonas</taxon>
    </lineage>
</organism>
<keyword id="KW-0997">Cell inner membrane</keyword>
<keyword id="KW-1003">Cell membrane</keyword>
<keyword id="KW-0472">Membrane</keyword>
<keyword id="KW-0653">Protein transport</keyword>
<keyword id="KW-0811">Translocation</keyword>
<keyword id="KW-0812">Transmembrane</keyword>
<keyword id="KW-1133">Transmembrane helix</keyword>
<keyword id="KW-0813">Transport</keyword>
<name>TATA_XANC8</name>
<protein>
    <recommendedName>
        <fullName evidence="1">Sec-independent protein translocase protein TatA</fullName>
    </recommendedName>
</protein>
<feature type="chain" id="PRO_1000044459" description="Sec-independent protein translocase protein TatA">
    <location>
        <begin position="1"/>
        <end position="75"/>
    </location>
</feature>
<feature type="transmembrane region" description="Helical" evidence="1">
    <location>
        <begin position="1"/>
        <end position="21"/>
    </location>
</feature>
<feature type="region of interest" description="Disordered" evidence="2">
    <location>
        <begin position="41"/>
        <end position="75"/>
    </location>
</feature>